<evidence type="ECO:0000255" key="1">
    <source>
        <dbReference type="HAMAP-Rule" id="MF_00134"/>
    </source>
</evidence>
<dbReference type="EC" id="4.1.1.48" evidence="1"/>
<dbReference type="EMBL" id="CP001050">
    <property type="protein sequence ID" value="ACF30728.1"/>
    <property type="molecule type" value="Genomic_DNA"/>
</dbReference>
<dbReference type="RefSeq" id="WP_003689906.1">
    <property type="nucleotide sequence ID" value="NC_011035.1"/>
</dbReference>
<dbReference type="SMR" id="B4RPF1"/>
<dbReference type="GeneID" id="66754007"/>
<dbReference type="KEGG" id="ngk:NGK_2120"/>
<dbReference type="HOGENOM" id="CLU_034247_2_0_4"/>
<dbReference type="UniPathway" id="UPA00035">
    <property type="reaction ID" value="UER00043"/>
</dbReference>
<dbReference type="Proteomes" id="UP000002564">
    <property type="component" value="Chromosome"/>
</dbReference>
<dbReference type="GO" id="GO:0004425">
    <property type="term" value="F:indole-3-glycerol-phosphate synthase activity"/>
    <property type="evidence" value="ECO:0007669"/>
    <property type="project" value="UniProtKB-UniRule"/>
</dbReference>
<dbReference type="GO" id="GO:0004640">
    <property type="term" value="F:phosphoribosylanthranilate isomerase activity"/>
    <property type="evidence" value="ECO:0007669"/>
    <property type="project" value="TreeGrafter"/>
</dbReference>
<dbReference type="GO" id="GO:0000162">
    <property type="term" value="P:L-tryptophan biosynthetic process"/>
    <property type="evidence" value="ECO:0007669"/>
    <property type="project" value="UniProtKB-UniRule"/>
</dbReference>
<dbReference type="CDD" id="cd00331">
    <property type="entry name" value="IGPS"/>
    <property type="match status" value="1"/>
</dbReference>
<dbReference type="FunFam" id="3.20.20.70:FF:000024">
    <property type="entry name" value="Indole-3-glycerol phosphate synthase"/>
    <property type="match status" value="1"/>
</dbReference>
<dbReference type="Gene3D" id="3.20.20.70">
    <property type="entry name" value="Aldolase class I"/>
    <property type="match status" value="1"/>
</dbReference>
<dbReference type="HAMAP" id="MF_00134_B">
    <property type="entry name" value="IGPS_B"/>
    <property type="match status" value="1"/>
</dbReference>
<dbReference type="InterPro" id="IPR013785">
    <property type="entry name" value="Aldolase_TIM"/>
</dbReference>
<dbReference type="InterPro" id="IPR045186">
    <property type="entry name" value="Indole-3-glycerol_P_synth"/>
</dbReference>
<dbReference type="InterPro" id="IPR013798">
    <property type="entry name" value="Indole-3-glycerol_P_synth_dom"/>
</dbReference>
<dbReference type="InterPro" id="IPR001468">
    <property type="entry name" value="Indole-3-GlycerolPSynthase_CS"/>
</dbReference>
<dbReference type="InterPro" id="IPR011060">
    <property type="entry name" value="RibuloseP-bd_barrel"/>
</dbReference>
<dbReference type="NCBIfam" id="NF001373">
    <property type="entry name" value="PRK00278.1-6"/>
    <property type="match status" value="1"/>
</dbReference>
<dbReference type="NCBIfam" id="NF001377">
    <property type="entry name" value="PRK00278.2-4"/>
    <property type="match status" value="1"/>
</dbReference>
<dbReference type="PANTHER" id="PTHR22854:SF2">
    <property type="entry name" value="INDOLE-3-GLYCEROL-PHOSPHATE SYNTHASE"/>
    <property type="match status" value="1"/>
</dbReference>
<dbReference type="PANTHER" id="PTHR22854">
    <property type="entry name" value="TRYPTOPHAN BIOSYNTHESIS PROTEIN"/>
    <property type="match status" value="1"/>
</dbReference>
<dbReference type="Pfam" id="PF00218">
    <property type="entry name" value="IGPS"/>
    <property type="match status" value="1"/>
</dbReference>
<dbReference type="SUPFAM" id="SSF51366">
    <property type="entry name" value="Ribulose-phoshate binding barrel"/>
    <property type="match status" value="1"/>
</dbReference>
<dbReference type="PROSITE" id="PS00614">
    <property type="entry name" value="IGPS"/>
    <property type="match status" value="1"/>
</dbReference>
<comment type="catalytic activity">
    <reaction evidence="1">
        <text>1-(2-carboxyphenylamino)-1-deoxy-D-ribulose 5-phosphate + H(+) = (1S,2R)-1-C-(indol-3-yl)glycerol 3-phosphate + CO2 + H2O</text>
        <dbReference type="Rhea" id="RHEA:23476"/>
        <dbReference type="ChEBI" id="CHEBI:15377"/>
        <dbReference type="ChEBI" id="CHEBI:15378"/>
        <dbReference type="ChEBI" id="CHEBI:16526"/>
        <dbReference type="ChEBI" id="CHEBI:58613"/>
        <dbReference type="ChEBI" id="CHEBI:58866"/>
        <dbReference type="EC" id="4.1.1.48"/>
    </reaction>
</comment>
<comment type="pathway">
    <text evidence="1">Amino-acid biosynthesis; L-tryptophan biosynthesis; L-tryptophan from chorismate: step 4/5.</text>
</comment>
<comment type="similarity">
    <text evidence="1">Belongs to the TrpC family.</text>
</comment>
<organism>
    <name type="scientific">Neisseria gonorrhoeae (strain NCCP11945)</name>
    <dbReference type="NCBI Taxonomy" id="521006"/>
    <lineage>
        <taxon>Bacteria</taxon>
        <taxon>Pseudomonadati</taxon>
        <taxon>Pseudomonadota</taxon>
        <taxon>Betaproteobacteria</taxon>
        <taxon>Neisseriales</taxon>
        <taxon>Neisseriaceae</taxon>
        <taxon>Neisseria</taxon>
    </lineage>
</organism>
<accession>B4RPF1</accession>
<name>TRPC_NEIG2</name>
<gene>
    <name evidence="1" type="primary">trpC</name>
    <name type="ordered locus">NGK_2120</name>
</gene>
<keyword id="KW-0028">Amino-acid biosynthesis</keyword>
<keyword id="KW-0057">Aromatic amino acid biosynthesis</keyword>
<keyword id="KW-0210">Decarboxylase</keyword>
<keyword id="KW-0456">Lyase</keyword>
<keyword id="KW-0822">Tryptophan biosynthesis</keyword>
<protein>
    <recommendedName>
        <fullName evidence="1">Indole-3-glycerol phosphate synthase</fullName>
        <shortName evidence="1">IGPS</shortName>
        <ecNumber evidence="1">4.1.1.48</ecNumber>
    </recommendedName>
</protein>
<proteinExistence type="inferred from homology"/>
<reference key="1">
    <citation type="journal article" date="2008" name="J. Bacteriol.">
        <title>Complete genome sequence of Neisseria gonorrhoeae NCCP11945.</title>
        <authorList>
            <person name="Chung G.T."/>
            <person name="Yoo J.S."/>
            <person name="Oh H.B."/>
            <person name="Lee Y.S."/>
            <person name="Cha S.H."/>
            <person name="Kim S.J."/>
            <person name="Yoo C.K."/>
        </authorList>
    </citation>
    <scope>NUCLEOTIDE SEQUENCE [LARGE SCALE GENOMIC DNA]</scope>
    <source>
        <strain>NCCP11945</strain>
    </source>
</reference>
<feature type="chain" id="PRO_1000095873" description="Indole-3-glycerol phosphate synthase">
    <location>
        <begin position="1"/>
        <end position="260"/>
    </location>
</feature>
<sequence length="260" mass="28592">MTDILNKILATKAQEVAAQKAAVNAEHIRALAAEAAPVRSFIDSIRGKHRLNLPAVIAEIKKASPSKGLIRPDFRPAEIARAYENAGAACLSVLTDEPYFQGSPEYLKQAREAVLLPVLRKDFIIDEYQVYQARAWGADAVLLIAAALEQGQLERFEALAHELGMTVLLELHDETELEKCRNLTTPLRGVNNRNLRTFEVSLDQTLSLLPALEGKTVVTESGITGKADVEFMRARGVHTFLIGETFMRADDIGAEVGKLF</sequence>